<organism>
    <name type="scientific">Mycoplasma genitalium (strain ATCC 33530 / DSM 19775 / NCTC 10195 / G37)</name>
    <name type="common">Mycoplasmoides genitalium</name>
    <dbReference type="NCBI Taxonomy" id="243273"/>
    <lineage>
        <taxon>Bacteria</taxon>
        <taxon>Bacillati</taxon>
        <taxon>Mycoplasmatota</taxon>
        <taxon>Mycoplasmoidales</taxon>
        <taxon>Mycoplasmoidaceae</taxon>
        <taxon>Mycoplasmoides</taxon>
    </lineage>
</organism>
<sequence>MQAANDHFFTGLSKKGPVRKENQDFYGFSFNQNNLLIVVCDGLGGYKGGKIASNLVGKLFLSLFEGFEFNQWDETTVKKWFENTLIQARFQLENCFQTVYEAQIQFARMASTLVLGILTKSDIYIFWIGDSRAYLLFENQAKLVTKDHNLYNQLVAMNADEKLLLSYSNQLLALTNTISKETKRPLVYGFYNTKIEQQEFLLLCSDGLYNFVEKELFFEIITNSKNLKQAVFNLYRKSIENASNDNITAALVNLQKWKQS</sequence>
<evidence type="ECO:0000255" key="1">
    <source>
        <dbReference type="PROSITE-ProRule" id="PRU01082"/>
    </source>
</evidence>
<reference key="1">
    <citation type="journal article" date="1995" name="Science">
        <title>The minimal gene complement of Mycoplasma genitalium.</title>
        <authorList>
            <person name="Fraser C.M."/>
            <person name="Gocayne J.D."/>
            <person name="White O."/>
            <person name="Adams M.D."/>
            <person name="Clayton R.A."/>
            <person name="Fleischmann R.D."/>
            <person name="Bult C.J."/>
            <person name="Kerlavage A.R."/>
            <person name="Sutton G.G."/>
            <person name="Kelley J.M."/>
            <person name="Fritchman J.L."/>
            <person name="Weidman J.F."/>
            <person name="Small K.V."/>
            <person name="Sandusky M."/>
            <person name="Fuhrmann J.L."/>
            <person name="Nguyen D.T."/>
            <person name="Utterback T.R."/>
            <person name="Saudek D.M."/>
            <person name="Phillips C.A."/>
            <person name="Merrick J.M."/>
            <person name="Tomb J.-F."/>
            <person name="Dougherty B.A."/>
            <person name="Bott K.F."/>
            <person name="Hu P.-C."/>
            <person name="Lucier T.S."/>
            <person name="Peterson S.N."/>
            <person name="Smith H.O."/>
            <person name="Hutchison C.A. III"/>
            <person name="Venter J.C."/>
        </authorList>
    </citation>
    <scope>NUCLEOTIDE SEQUENCE [LARGE SCALE GENOMIC DNA]</scope>
    <source>
        <strain>ATCC 33530 / DSM 19775 / NCTC 10195 / G37</strain>
    </source>
</reference>
<reference key="2">
    <citation type="journal article" date="1993" name="J. Bacteriol.">
        <title>A survey of the Mycoplasma genitalium genome by using random sequencing.</title>
        <authorList>
            <person name="Peterson S.N."/>
            <person name="Hu P.-C."/>
            <person name="Bott K.F."/>
            <person name="Hutchison C.A. III"/>
        </authorList>
    </citation>
    <scope>NUCLEOTIDE SEQUENCE [GENOMIC DNA] OF 200-260</scope>
    <source>
        <strain>ATCC 33530 / DSM 19775 / NCTC 10195 / G37</strain>
    </source>
</reference>
<gene>
    <name type="ordered locus">MG108</name>
</gene>
<feature type="chain" id="PRO_0000057795" description="Putative protein phosphatase">
    <location>
        <begin position="1"/>
        <end position="260"/>
    </location>
</feature>
<feature type="domain" description="PPM-type phosphatase" evidence="1">
    <location>
        <begin position="9"/>
        <end position="254"/>
    </location>
</feature>
<comment type="catalytic activity">
    <reaction>
        <text>O-phospho-L-seryl-[protein] + H2O = L-seryl-[protein] + phosphate</text>
        <dbReference type="Rhea" id="RHEA:20629"/>
        <dbReference type="Rhea" id="RHEA-COMP:9863"/>
        <dbReference type="Rhea" id="RHEA-COMP:11604"/>
        <dbReference type="ChEBI" id="CHEBI:15377"/>
        <dbReference type="ChEBI" id="CHEBI:29999"/>
        <dbReference type="ChEBI" id="CHEBI:43474"/>
        <dbReference type="ChEBI" id="CHEBI:83421"/>
        <dbReference type="EC" id="3.1.3.16"/>
    </reaction>
</comment>
<comment type="catalytic activity">
    <reaction>
        <text>O-phospho-L-threonyl-[protein] + H2O = L-threonyl-[protein] + phosphate</text>
        <dbReference type="Rhea" id="RHEA:47004"/>
        <dbReference type="Rhea" id="RHEA-COMP:11060"/>
        <dbReference type="Rhea" id="RHEA-COMP:11605"/>
        <dbReference type="ChEBI" id="CHEBI:15377"/>
        <dbReference type="ChEBI" id="CHEBI:30013"/>
        <dbReference type="ChEBI" id="CHEBI:43474"/>
        <dbReference type="ChEBI" id="CHEBI:61977"/>
        <dbReference type="EC" id="3.1.3.16"/>
    </reaction>
</comment>
<dbReference type="EC" id="3.1.3.16"/>
<dbReference type="EMBL" id="L43967">
    <property type="protein sequence ID" value="AAC71326.1"/>
    <property type="molecule type" value="Genomic_DNA"/>
</dbReference>
<dbReference type="EMBL" id="U02111">
    <property type="protein sequence ID" value="AAD12384.1"/>
    <property type="molecule type" value="Genomic_DNA"/>
</dbReference>
<dbReference type="PIR" id="I64211">
    <property type="entry name" value="I64211"/>
</dbReference>
<dbReference type="RefSeq" id="WP_010869334.1">
    <property type="nucleotide sequence ID" value="NC_000908.2"/>
</dbReference>
<dbReference type="SMR" id="P47354"/>
<dbReference type="FunCoup" id="P47354">
    <property type="interactions" value="66"/>
</dbReference>
<dbReference type="STRING" id="243273.MG_108"/>
<dbReference type="GeneID" id="88282232"/>
<dbReference type="KEGG" id="mge:MG_108"/>
<dbReference type="eggNOG" id="COG0631">
    <property type="taxonomic scope" value="Bacteria"/>
</dbReference>
<dbReference type="HOGENOM" id="CLU_034545_0_3_14"/>
<dbReference type="InParanoid" id="P47354"/>
<dbReference type="OrthoDB" id="9801841at2"/>
<dbReference type="BioCyc" id="MGEN243273:G1GJ2-121-MONOMER"/>
<dbReference type="Proteomes" id="UP000000807">
    <property type="component" value="Chromosome"/>
</dbReference>
<dbReference type="GO" id="GO:0004722">
    <property type="term" value="F:protein serine/threonine phosphatase activity"/>
    <property type="evidence" value="ECO:0007669"/>
    <property type="project" value="UniProtKB-EC"/>
</dbReference>
<dbReference type="GO" id="GO:0007165">
    <property type="term" value="P:signal transduction"/>
    <property type="evidence" value="ECO:0000318"/>
    <property type="project" value="GO_Central"/>
</dbReference>
<dbReference type="CDD" id="cd00143">
    <property type="entry name" value="PP2Cc"/>
    <property type="match status" value="1"/>
</dbReference>
<dbReference type="Gene3D" id="3.60.40.10">
    <property type="entry name" value="PPM-type phosphatase domain"/>
    <property type="match status" value="1"/>
</dbReference>
<dbReference type="InterPro" id="IPR015655">
    <property type="entry name" value="PP2C"/>
</dbReference>
<dbReference type="InterPro" id="IPR036457">
    <property type="entry name" value="PPM-type-like_dom_sf"/>
</dbReference>
<dbReference type="InterPro" id="IPR001932">
    <property type="entry name" value="PPM-type_phosphatase-like_dom"/>
</dbReference>
<dbReference type="PANTHER" id="PTHR47992">
    <property type="entry name" value="PROTEIN PHOSPHATASE"/>
    <property type="match status" value="1"/>
</dbReference>
<dbReference type="Pfam" id="PF13672">
    <property type="entry name" value="PP2C_2"/>
    <property type="match status" value="1"/>
</dbReference>
<dbReference type="SMART" id="SM00331">
    <property type="entry name" value="PP2C_SIG"/>
    <property type="match status" value="1"/>
</dbReference>
<dbReference type="SMART" id="SM00332">
    <property type="entry name" value="PP2Cc"/>
    <property type="match status" value="1"/>
</dbReference>
<dbReference type="SUPFAM" id="SSF81606">
    <property type="entry name" value="PP2C-like"/>
    <property type="match status" value="1"/>
</dbReference>
<dbReference type="PROSITE" id="PS51746">
    <property type="entry name" value="PPM_2"/>
    <property type="match status" value="1"/>
</dbReference>
<accession>P47354</accession>
<protein>
    <recommendedName>
        <fullName>Putative protein phosphatase</fullName>
        <ecNumber>3.1.3.16</ecNumber>
    </recommendedName>
</protein>
<proteinExistence type="predicted"/>
<keyword id="KW-0378">Hydrolase</keyword>
<keyword id="KW-0904">Protein phosphatase</keyword>
<keyword id="KW-1185">Reference proteome</keyword>
<name>PPH_MYCGE</name>